<proteinExistence type="evidence at protein level"/>
<accession>P0C6S4</accession>
<keyword id="KW-1217">Cell adhesion impairing toxin</keyword>
<keyword id="KW-0903">Direct protein sequencing</keyword>
<keyword id="KW-1015">Disulfide bond</keyword>
<keyword id="KW-1199">Hemostasis impairing toxin</keyword>
<keyword id="KW-1201">Platelet aggregation inhibiting toxin</keyword>
<keyword id="KW-0964">Secreted</keyword>
<keyword id="KW-0800">Toxin</keyword>
<name>VM2TO_ERIMA</name>
<protein>
    <recommendedName>
        <fullName evidence="10">Disintegrin eristostatin</fullName>
    </recommendedName>
</protein>
<comment type="function">
    <text evidence="3 4 5 6 7 9">Is a potent inhibitor of ADP-induced platelet aggregation. Acts by binding to alpha-IIb/beta-3 (ITGA2B/ITGB3) receptor on the platelet surface. Binds with the same high affinity to resting and activated platelets. Also binds the alpha-4/beta-1 (ITGA4/ITGB1) integrin. Is a potent inhibitor of human and murine melanoma metastases in mouse model systems, also due to the inhibition of binding between the alpha-4/beta-1 integrin and the vascular cell adhesion protein VCAM1. Reacts neither with the integrin alpha-V/beta-3 (ITGAV/ITGB3) vitronectin receptor nor with the integrin alpha-5/beta-1 (ITGA5/ITGB1) fibronectin receptor. Has no effect on cell proliferation or angiogenesis. Specifically inhibits cell migration on fibronectin, but not that on collagen IV or laminin. May involve fibronectin-binding integrins that mediate cell migration.</text>
</comment>
<comment type="subunit">
    <text evidence="1">Monomer.</text>
</comment>
<comment type="subcellular location">
    <subcellularLocation>
        <location evidence="7">Secreted</location>
    </subcellularLocation>
</comment>
<comment type="tissue specificity">
    <text evidence="12">Expressed by the venom gland.</text>
</comment>
<comment type="miscellaneous">
    <text evidence="11">The disintegrin belongs to the short disintegrin subfamily.</text>
</comment>
<comment type="similarity">
    <text evidence="11">Belongs to the venom metalloproteinase (M12B) family. P-II subfamily. P-IIa sub-subfamily.</text>
</comment>
<sequence length="49" mass="5511">QEEPCATGPCCRRCKFKRAGKVCRVARGDWNDDYCTGKSCDCPKNPWNG</sequence>
<dbReference type="SMR" id="P0C6S4"/>
<dbReference type="GO" id="GO:0005576">
    <property type="term" value="C:extracellular region"/>
    <property type="evidence" value="ECO:0007669"/>
    <property type="project" value="UniProtKB-SubCell"/>
</dbReference>
<dbReference type="GO" id="GO:0090729">
    <property type="term" value="F:toxin activity"/>
    <property type="evidence" value="ECO:0007669"/>
    <property type="project" value="UniProtKB-KW"/>
</dbReference>
<dbReference type="Gene3D" id="4.10.70.10">
    <property type="entry name" value="Disintegrin domain"/>
    <property type="match status" value="1"/>
</dbReference>
<dbReference type="InterPro" id="IPR018358">
    <property type="entry name" value="Disintegrin_CS"/>
</dbReference>
<dbReference type="InterPro" id="IPR001762">
    <property type="entry name" value="Disintegrin_dom"/>
</dbReference>
<dbReference type="InterPro" id="IPR036436">
    <property type="entry name" value="Disintegrin_dom_sf"/>
</dbReference>
<dbReference type="PRINTS" id="PR00289">
    <property type="entry name" value="DISINTEGRIN"/>
</dbReference>
<dbReference type="SMART" id="SM00050">
    <property type="entry name" value="DISIN"/>
    <property type="match status" value="1"/>
</dbReference>
<dbReference type="SUPFAM" id="SSF57552">
    <property type="entry name" value="Blood coagulation inhibitor (disintegrin)"/>
    <property type="match status" value="1"/>
</dbReference>
<dbReference type="PROSITE" id="PS00427">
    <property type="entry name" value="DISINTEGRIN_1"/>
    <property type="match status" value="1"/>
</dbReference>
<dbReference type="PROSITE" id="PS50214">
    <property type="entry name" value="DISINTEGRIN_2"/>
    <property type="match status" value="1"/>
</dbReference>
<reference key="1">
    <citation type="journal article" date="1994" name="Biochem. J.">
        <title>Interaction of disintegrins with the alpha IIb beta 3 receptor on resting and activated human platelets.</title>
        <authorList>
            <person name="McLane M.A."/>
            <person name="Kowalska M.A."/>
            <person name="Silver L."/>
            <person name="Shattil S.J."/>
            <person name="Niewiarowski S."/>
        </authorList>
    </citation>
    <scope>PROTEIN SEQUENCE</scope>
    <scope>FUNCTION</scope>
    <scope>SUBCELLULAR LOCATION</scope>
    <source>
        <tissue>Venom</tissue>
    </source>
</reference>
<reference key="2">
    <citation type="journal article" date="1994" name="Cell Adhes. Commun.">
        <title>Comparison of disintegrins with limited variation in the RGD loop in their binding to purified integrins alpha IIb beta 3, alpha V beta 3 and alpha 5 beta 1 and in cell adhesion inhibition.</title>
        <authorList>
            <person name="Pfaff M."/>
            <person name="McLane M.A."/>
            <person name="Beviglia L."/>
            <person name="Niewiarowski S."/>
            <person name="Timpl R."/>
        </authorList>
    </citation>
    <scope>FUNCTION</scope>
    <source>
        <tissue>Venom</tissue>
    </source>
</reference>
<reference key="3">
    <citation type="journal article" date="1995" name="Exp. Cell Res.">
        <title>Effects of the disintegrin eristostatin on individual steps of hematogenous metastasis.</title>
        <authorList>
            <person name="Morris V.L."/>
            <person name="Schmidt E.E."/>
            <person name="Koop S."/>
            <person name="MacDonald I.C."/>
            <person name="Grattan M."/>
            <person name="Khokha R."/>
            <person name="McLane M.A."/>
            <person name="Niewiarowski S."/>
            <person name="Chambers A.F."/>
            <person name="Groom A.C."/>
        </authorList>
    </citation>
    <scope>FUNCTION ON METASTASIS</scope>
</reference>
<reference key="4">
    <citation type="journal article" date="1995" name="Oncol. Res.">
        <title>Effect of four disintegrins on the adhesive and metastatic properties of B16F10 melanoma cells in a murine model.</title>
        <authorList>
            <person name="Beviglia L."/>
            <person name="Stewart G.J."/>
            <person name="Niewiarowski S."/>
        </authorList>
    </citation>
    <scope>FUNCTION ON METASTASIS</scope>
</reference>
<reference key="5">
    <citation type="journal article" date="1996" name="FEBS Lett.">
        <title>Importance of the structure of the RGD-containing loop in the disintegrins echistatin and eristostatin for recognition of alpha IIb beta 3 and alpha v beta 3 integrins.</title>
        <authorList>
            <person name="McLane M.A."/>
            <person name="Vijay-Kumar S."/>
            <person name="Marcinkiewicz C."/>
            <person name="Calvete J.J."/>
            <person name="Niewiarowski S."/>
        </authorList>
    </citation>
    <scope>DISULFIDE BONDS</scope>
    <source>
        <tissue>Venom</tissue>
    </source>
</reference>
<reference key="6">
    <citation type="journal article" date="1998" name="Exp. Cell Res.">
        <title>The disintegrin eristostatin interferes with integrin alpha 4 beta 1 function and with experimental metastasis of human melanoma cells.</title>
        <authorList>
            <person name="Danen E.H."/>
            <person name="Marcinkiewicz C."/>
            <person name="Cornelissen I.M."/>
            <person name="van Kraats A.A."/>
            <person name="Pachter J.A."/>
            <person name="Ruiter D.J."/>
            <person name="Niewiarowski S."/>
            <person name="van Muijen G.N."/>
        </authorList>
    </citation>
    <scope>FUNCTION ON METASTASIS</scope>
</reference>
<reference key="7">
    <citation type="journal article" date="2007" name="Toxicon">
        <title>Inhibition of melanoma cell motility by the snake venom disintegrin eristostatin.</title>
        <authorList>
            <person name="Tian J."/>
            <person name="Paquette-Straub C."/>
            <person name="Sage E.H."/>
            <person name="Funk S.E."/>
            <person name="Patel V."/>
            <person name="Galileo D."/>
            <person name="McLane M.A."/>
        </authorList>
    </citation>
    <scope>FUNCTION</scope>
    <scope>MUTAGENESIS OF GLN-1; GLU-2; GLU-3; PRO-4; THR-7; ARG-13; LYS-17; ARG-18; LYS-21; VAL-22; ARG-24; VAL-25; ARG-27; GLY-28; ASP-29; TRP-30; ASN-31; ASP-33; SER-39; ASP-41; TRP-47; ASN-48 AND GLY-49</scope>
    <source>
        <tissue>Venom</tissue>
    </source>
</reference>
<feature type="chain" id="PRO_0000326414" description="Disintegrin eristostatin" evidence="7">
    <location>
        <begin position="1"/>
        <end position="49"/>
    </location>
</feature>
<feature type="domain" description="Disintegrin" evidence="2">
    <location>
        <begin position="1"/>
        <end position="49"/>
    </location>
</feature>
<feature type="short sequence motif" description="Cell attachment site">
    <location>
        <begin position="27"/>
        <end position="29"/>
    </location>
</feature>
<feature type="disulfide bond" evidence="8">
    <location>
        <begin position="5"/>
        <end position="14"/>
    </location>
</feature>
<feature type="disulfide bond" evidence="8">
    <location>
        <begin position="10"/>
        <end position="35"/>
    </location>
</feature>
<feature type="disulfide bond" evidence="8">
    <location>
        <begin position="11"/>
        <end position="40"/>
    </location>
</feature>
<feature type="disulfide bond" evidence="8">
    <location>
        <begin position="23"/>
        <end position="42"/>
    </location>
</feature>
<feature type="mutagenesis site" description="No change in inhibition of wound closure and platelet aggregation." evidence="3">
    <original>Q</original>
    <variation>A</variation>
    <location>
        <position position="1"/>
    </location>
</feature>
<feature type="mutagenesis site" description="Loss of inhibition of wound closure, but no change in platelet aggregation." evidence="3">
    <original>E</original>
    <variation>A</variation>
    <location>
        <position position="2"/>
    </location>
</feature>
<feature type="mutagenesis site" description="No change in inhibition of wound closure and platelet aggregation." evidence="3">
    <original>E</original>
    <variation>A</variation>
    <location>
        <position position="3"/>
    </location>
</feature>
<feature type="mutagenesis site" description="Only inhibition of platelet aggregation." evidence="3">
    <original>P</original>
    <variation>A</variation>
    <location>
        <position position="4"/>
    </location>
</feature>
<feature type="mutagenesis site" description="Loss of inhibition of wound closure, but no change in platelet aggregation." evidence="3">
    <original>T</original>
    <variation>A</variation>
    <location>
        <position position="7"/>
    </location>
</feature>
<feature type="mutagenesis site" description="Loss of inhibition of wound closure, but no change in platelet aggregation." evidence="3">
    <original>R</original>
    <variation>A</variation>
    <location>
        <position position="13"/>
    </location>
</feature>
<feature type="mutagenesis site" description="Loss of inhibition of wound closure, and of platelet aggregation." evidence="3">
    <original>K</original>
    <variation>A</variation>
    <location>
        <position position="17"/>
    </location>
</feature>
<feature type="mutagenesis site" description="Loss of inhibition of wound closure, and of platelet aggregation." evidence="3">
    <original>R</original>
    <variation>A</variation>
    <location>
        <position position="18"/>
    </location>
</feature>
<feature type="mutagenesis site" description="Only inhibition of platelet aggregation." evidence="3">
    <original>K</original>
    <variation>A</variation>
    <location>
        <position position="21"/>
    </location>
</feature>
<feature type="mutagenesis site" description="Only inhibition of platelet aggregation." evidence="3">
    <original>V</original>
    <variation>A</variation>
    <location>
        <position position="22"/>
    </location>
</feature>
<feature type="mutagenesis site" description="Loss of inhibition of wound closure, and of platelet aggregation." evidence="3">
    <original>R</original>
    <variation>A</variation>
    <location>
        <position position="24"/>
    </location>
</feature>
<feature type="mutagenesis site" description="Loss of inhibition of wound closure, and of platelet aggregation." evidence="3">
    <original>V</original>
    <variation>A</variation>
    <location>
        <position position="25"/>
    </location>
</feature>
<feature type="mutagenesis site" description="Loss of inhibition of wound closure, and of platelet aggregation." evidence="3">
    <original>R</original>
    <variation>A</variation>
    <location>
        <position position="27"/>
    </location>
</feature>
<feature type="mutagenesis site" description="Loss of inhibition of wound closure, and of platelet aggregation." evidence="3">
    <original>G</original>
    <variation>A</variation>
    <location>
        <position position="28"/>
    </location>
</feature>
<feature type="mutagenesis site" description="Loss of inhibition of wound closure, and of platelet aggregation." evidence="3">
    <original>D</original>
    <variation>A</variation>
    <location>
        <position position="29"/>
    </location>
</feature>
<feature type="mutagenesis site" description="Loss of inhibition of wound closure, and of platelet aggregation." evidence="3">
    <original>W</original>
    <variation>A</variation>
    <location>
        <position position="30"/>
    </location>
</feature>
<feature type="mutagenesis site" description="Loss of inhibition of wound closure, and of platelet aggregation." evidence="3">
    <original>N</original>
    <variation>A</variation>
    <location>
        <position position="31"/>
    </location>
</feature>
<feature type="mutagenesis site" description="No change in inhibition of wound closure and platelet aggregation." evidence="3">
    <original>D</original>
    <variation>A</variation>
    <location>
        <position position="33"/>
    </location>
</feature>
<feature type="mutagenesis site" description="Loss of inhibition of wound closure, and of platelet aggregation." evidence="3">
    <original>S</original>
    <variation>A</variation>
    <location>
        <position position="39"/>
    </location>
</feature>
<feature type="mutagenesis site" description="Loss of inhibition of wound closure, and of platelet aggregation." evidence="3">
    <original>D</original>
    <variation>A</variation>
    <location>
        <position position="41"/>
    </location>
</feature>
<feature type="mutagenesis site" description="Loss of inhibition of wound closure, but no change in platelet aggregation." evidence="3">
    <original>W</original>
    <variation>A</variation>
    <location>
        <position position="47"/>
    </location>
</feature>
<feature type="mutagenesis site" description="Loss of inhibition of wound closure, but no change in platelet aggregation." evidence="3">
    <original>N</original>
    <variation>A</variation>
    <location>
        <position position="48"/>
    </location>
</feature>
<feature type="mutagenesis site" description="Loss of inhibition of wound closure, but no change in platelet aggregation." evidence="3">
    <original>G</original>
    <variation>A</variation>
    <location>
        <position position="49"/>
    </location>
</feature>
<evidence type="ECO:0000250" key="1"/>
<evidence type="ECO:0000255" key="2">
    <source>
        <dbReference type="PROSITE-ProRule" id="PRU00068"/>
    </source>
</evidence>
<evidence type="ECO:0000269" key="3">
    <source>
    </source>
</evidence>
<evidence type="ECO:0000269" key="4">
    <source>
    </source>
</evidence>
<evidence type="ECO:0000269" key="5">
    <source>
    </source>
</evidence>
<evidence type="ECO:0000269" key="6">
    <source>
    </source>
</evidence>
<evidence type="ECO:0000269" key="7">
    <source>
    </source>
</evidence>
<evidence type="ECO:0000269" key="8">
    <source>
    </source>
</evidence>
<evidence type="ECO:0000269" key="9">
    <source>
    </source>
</evidence>
<evidence type="ECO:0000303" key="10">
    <source>
    </source>
</evidence>
<evidence type="ECO:0000305" key="11"/>
<evidence type="ECO:0000305" key="12">
    <source>
    </source>
</evidence>
<organism>
    <name type="scientific">Eristicophis macmahoni</name>
    <name type="common">Leaf-nosed viper</name>
    <dbReference type="NCBI Taxonomy" id="110227"/>
    <lineage>
        <taxon>Eukaryota</taxon>
        <taxon>Metazoa</taxon>
        <taxon>Chordata</taxon>
        <taxon>Craniata</taxon>
        <taxon>Vertebrata</taxon>
        <taxon>Euteleostomi</taxon>
        <taxon>Lepidosauria</taxon>
        <taxon>Squamata</taxon>
        <taxon>Bifurcata</taxon>
        <taxon>Unidentata</taxon>
        <taxon>Episquamata</taxon>
        <taxon>Toxicofera</taxon>
        <taxon>Serpentes</taxon>
        <taxon>Colubroidea</taxon>
        <taxon>Viperidae</taxon>
        <taxon>Viperinae</taxon>
        <taxon>Eristicophis</taxon>
    </lineage>
</organism>